<protein>
    <recommendedName>
        <fullName evidence="1">Aspartate--tRNA ligase</fullName>
        <ecNumber evidence="1">6.1.1.12</ecNumber>
    </recommendedName>
    <alternativeName>
        <fullName evidence="1">Aspartyl-tRNA synthetase</fullName>
        <shortName evidence="1">AspRS</shortName>
    </alternativeName>
</protein>
<dbReference type="EC" id="6.1.1.12" evidence="1"/>
<dbReference type="EMBL" id="FM204884">
    <property type="protein sequence ID" value="CAX00825.1"/>
    <property type="molecule type" value="Genomic_DNA"/>
</dbReference>
<dbReference type="SMR" id="C0MGD3"/>
<dbReference type="KEGG" id="seq:SZO_18810"/>
<dbReference type="eggNOG" id="COG0173">
    <property type="taxonomic scope" value="Bacteria"/>
</dbReference>
<dbReference type="HOGENOM" id="CLU_014330_3_2_9"/>
<dbReference type="Proteomes" id="UP000001368">
    <property type="component" value="Chromosome"/>
</dbReference>
<dbReference type="GO" id="GO:0005737">
    <property type="term" value="C:cytoplasm"/>
    <property type="evidence" value="ECO:0007669"/>
    <property type="project" value="UniProtKB-SubCell"/>
</dbReference>
<dbReference type="GO" id="GO:0004815">
    <property type="term" value="F:aspartate-tRNA ligase activity"/>
    <property type="evidence" value="ECO:0007669"/>
    <property type="project" value="UniProtKB-UniRule"/>
</dbReference>
<dbReference type="GO" id="GO:0005524">
    <property type="term" value="F:ATP binding"/>
    <property type="evidence" value="ECO:0007669"/>
    <property type="project" value="UniProtKB-UniRule"/>
</dbReference>
<dbReference type="GO" id="GO:0140096">
    <property type="term" value="F:catalytic activity, acting on a protein"/>
    <property type="evidence" value="ECO:0007669"/>
    <property type="project" value="UniProtKB-ARBA"/>
</dbReference>
<dbReference type="GO" id="GO:0003676">
    <property type="term" value="F:nucleic acid binding"/>
    <property type="evidence" value="ECO:0007669"/>
    <property type="project" value="InterPro"/>
</dbReference>
<dbReference type="GO" id="GO:0016740">
    <property type="term" value="F:transferase activity"/>
    <property type="evidence" value="ECO:0007669"/>
    <property type="project" value="UniProtKB-ARBA"/>
</dbReference>
<dbReference type="GO" id="GO:0006422">
    <property type="term" value="P:aspartyl-tRNA aminoacylation"/>
    <property type="evidence" value="ECO:0007669"/>
    <property type="project" value="UniProtKB-UniRule"/>
</dbReference>
<dbReference type="CDD" id="cd00777">
    <property type="entry name" value="AspRS_core"/>
    <property type="match status" value="1"/>
</dbReference>
<dbReference type="CDD" id="cd04317">
    <property type="entry name" value="EcAspRS_like_N"/>
    <property type="match status" value="1"/>
</dbReference>
<dbReference type="Gene3D" id="3.30.930.10">
    <property type="entry name" value="Bira Bifunctional Protein, Domain 2"/>
    <property type="match status" value="1"/>
</dbReference>
<dbReference type="Gene3D" id="3.30.1360.30">
    <property type="entry name" value="GAD-like domain"/>
    <property type="match status" value="1"/>
</dbReference>
<dbReference type="Gene3D" id="2.40.50.140">
    <property type="entry name" value="Nucleic acid-binding proteins"/>
    <property type="match status" value="1"/>
</dbReference>
<dbReference type="HAMAP" id="MF_00044">
    <property type="entry name" value="Asp_tRNA_synth_type1"/>
    <property type="match status" value="1"/>
</dbReference>
<dbReference type="InterPro" id="IPR004364">
    <property type="entry name" value="Aa-tRNA-synt_II"/>
</dbReference>
<dbReference type="InterPro" id="IPR006195">
    <property type="entry name" value="aa-tRNA-synth_II"/>
</dbReference>
<dbReference type="InterPro" id="IPR045864">
    <property type="entry name" value="aa-tRNA-synth_II/BPL/LPL"/>
</dbReference>
<dbReference type="InterPro" id="IPR004524">
    <property type="entry name" value="Asp-tRNA-ligase_1"/>
</dbReference>
<dbReference type="InterPro" id="IPR047089">
    <property type="entry name" value="Asp-tRNA-ligase_1_N"/>
</dbReference>
<dbReference type="InterPro" id="IPR002312">
    <property type="entry name" value="Asp/Asn-tRNA-synth_IIb"/>
</dbReference>
<dbReference type="InterPro" id="IPR047090">
    <property type="entry name" value="AspRS_core"/>
</dbReference>
<dbReference type="InterPro" id="IPR004115">
    <property type="entry name" value="GAD-like_sf"/>
</dbReference>
<dbReference type="InterPro" id="IPR029351">
    <property type="entry name" value="GAD_dom"/>
</dbReference>
<dbReference type="InterPro" id="IPR012340">
    <property type="entry name" value="NA-bd_OB-fold"/>
</dbReference>
<dbReference type="InterPro" id="IPR004365">
    <property type="entry name" value="NA-bd_OB_tRNA"/>
</dbReference>
<dbReference type="NCBIfam" id="TIGR00459">
    <property type="entry name" value="aspS_bact"/>
    <property type="match status" value="1"/>
</dbReference>
<dbReference type="NCBIfam" id="NF001750">
    <property type="entry name" value="PRK00476.1"/>
    <property type="match status" value="1"/>
</dbReference>
<dbReference type="PANTHER" id="PTHR22594:SF5">
    <property type="entry name" value="ASPARTATE--TRNA LIGASE, MITOCHONDRIAL"/>
    <property type="match status" value="1"/>
</dbReference>
<dbReference type="PANTHER" id="PTHR22594">
    <property type="entry name" value="ASPARTYL/LYSYL-TRNA SYNTHETASE"/>
    <property type="match status" value="1"/>
</dbReference>
<dbReference type="Pfam" id="PF02938">
    <property type="entry name" value="GAD"/>
    <property type="match status" value="1"/>
</dbReference>
<dbReference type="Pfam" id="PF00152">
    <property type="entry name" value="tRNA-synt_2"/>
    <property type="match status" value="1"/>
</dbReference>
<dbReference type="Pfam" id="PF01336">
    <property type="entry name" value="tRNA_anti-codon"/>
    <property type="match status" value="1"/>
</dbReference>
<dbReference type="PRINTS" id="PR01042">
    <property type="entry name" value="TRNASYNTHASP"/>
</dbReference>
<dbReference type="SUPFAM" id="SSF55681">
    <property type="entry name" value="Class II aaRS and biotin synthetases"/>
    <property type="match status" value="1"/>
</dbReference>
<dbReference type="SUPFAM" id="SSF55261">
    <property type="entry name" value="GAD domain-like"/>
    <property type="match status" value="1"/>
</dbReference>
<dbReference type="SUPFAM" id="SSF50249">
    <property type="entry name" value="Nucleic acid-binding proteins"/>
    <property type="match status" value="1"/>
</dbReference>
<dbReference type="PROSITE" id="PS50862">
    <property type="entry name" value="AA_TRNA_LIGASE_II"/>
    <property type="match status" value="1"/>
</dbReference>
<evidence type="ECO:0000255" key="1">
    <source>
        <dbReference type="HAMAP-Rule" id="MF_00044"/>
    </source>
</evidence>
<reference key="1">
    <citation type="journal article" date="2009" name="PLoS Pathog.">
        <title>Genomic evidence for the evolution of Streptococcus equi: host restriction, increased virulence, and genetic exchange with human pathogens.</title>
        <authorList>
            <person name="Holden M.T.G."/>
            <person name="Heather Z."/>
            <person name="Paillot R."/>
            <person name="Steward K.F."/>
            <person name="Webb K."/>
            <person name="Ainslie F."/>
            <person name="Jourdan T."/>
            <person name="Bason N.C."/>
            <person name="Holroyd N.E."/>
            <person name="Mungall K."/>
            <person name="Quail M.A."/>
            <person name="Sanders M."/>
            <person name="Simmonds M."/>
            <person name="Willey D."/>
            <person name="Brooks K."/>
            <person name="Aanensen D.M."/>
            <person name="Spratt B.G."/>
            <person name="Jolley K.A."/>
            <person name="Maiden M.C.J."/>
            <person name="Kehoe M."/>
            <person name="Chanter N."/>
            <person name="Bentley S.D."/>
            <person name="Robinson C."/>
            <person name="Maskell D.J."/>
            <person name="Parkhill J."/>
            <person name="Waller A.S."/>
        </authorList>
    </citation>
    <scope>NUCLEOTIDE SEQUENCE [LARGE SCALE GENOMIC DNA]</scope>
    <source>
        <strain>H70</strain>
    </source>
</reference>
<accession>C0MGD3</accession>
<organism>
    <name type="scientific">Streptococcus equi subsp. zooepidemicus (strain H70)</name>
    <dbReference type="NCBI Taxonomy" id="553483"/>
    <lineage>
        <taxon>Bacteria</taxon>
        <taxon>Bacillati</taxon>
        <taxon>Bacillota</taxon>
        <taxon>Bacilli</taxon>
        <taxon>Lactobacillales</taxon>
        <taxon>Streptococcaceae</taxon>
        <taxon>Streptococcus</taxon>
    </lineage>
</organism>
<gene>
    <name evidence="1" type="primary">aspS</name>
    <name type="ordered locus">SZO_18810</name>
</gene>
<feature type="chain" id="PRO_1000202168" description="Aspartate--tRNA ligase">
    <location>
        <begin position="1"/>
        <end position="582"/>
    </location>
</feature>
<feature type="region of interest" description="Aspartate" evidence="1">
    <location>
        <begin position="198"/>
        <end position="201"/>
    </location>
</feature>
<feature type="binding site" evidence="1">
    <location>
        <position position="174"/>
    </location>
    <ligand>
        <name>L-aspartate</name>
        <dbReference type="ChEBI" id="CHEBI:29991"/>
    </ligand>
</feature>
<feature type="binding site" evidence="1">
    <location>
        <begin position="220"/>
        <end position="222"/>
    </location>
    <ligand>
        <name>ATP</name>
        <dbReference type="ChEBI" id="CHEBI:30616"/>
    </ligand>
</feature>
<feature type="binding site" evidence="1">
    <location>
        <position position="220"/>
    </location>
    <ligand>
        <name>L-aspartate</name>
        <dbReference type="ChEBI" id="CHEBI:29991"/>
    </ligand>
</feature>
<feature type="binding site" evidence="1">
    <location>
        <position position="229"/>
    </location>
    <ligand>
        <name>ATP</name>
        <dbReference type="ChEBI" id="CHEBI:30616"/>
    </ligand>
</feature>
<feature type="binding site" evidence="1">
    <location>
        <position position="443"/>
    </location>
    <ligand>
        <name>L-aspartate</name>
        <dbReference type="ChEBI" id="CHEBI:29991"/>
    </ligand>
</feature>
<feature type="binding site" evidence="1">
    <location>
        <position position="477"/>
    </location>
    <ligand>
        <name>ATP</name>
        <dbReference type="ChEBI" id="CHEBI:30616"/>
    </ligand>
</feature>
<feature type="binding site" evidence="1">
    <location>
        <position position="484"/>
    </location>
    <ligand>
        <name>L-aspartate</name>
        <dbReference type="ChEBI" id="CHEBI:29991"/>
    </ligand>
</feature>
<feature type="binding site" evidence="1">
    <location>
        <begin position="529"/>
        <end position="532"/>
    </location>
    <ligand>
        <name>ATP</name>
        <dbReference type="ChEBI" id="CHEBI:30616"/>
    </ligand>
</feature>
<name>SYD_STRS7</name>
<keyword id="KW-0030">Aminoacyl-tRNA synthetase</keyword>
<keyword id="KW-0067">ATP-binding</keyword>
<keyword id="KW-0963">Cytoplasm</keyword>
<keyword id="KW-0436">Ligase</keyword>
<keyword id="KW-0547">Nucleotide-binding</keyword>
<keyword id="KW-0648">Protein biosynthesis</keyword>
<comment type="function">
    <text evidence="1">Catalyzes the attachment of L-aspartate to tRNA(Asp) in a two-step reaction: L-aspartate is first activated by ATP to form Asp-AMP and then transferred to the acceptor end of tRNA(Asp).</text>
</comment>
<comment type="catalytic activity">
    <reaction evidence="1">
        <text>tRNA(Asp) + L-aspartate + ATP = L-aspartyl-tRNA(Asp) + AMP + diphosphate</text>
        <dbReference type="Rhea" id="RHEA:19649"/>
        <dbReference type="Rhea" id="RHEA-COMP:9660"/>
        <dbReference type="Rhea" id="RHEA-COMP:9678"/>
        <dbReference type="ChEBI" id="CHEBI:29991"/>
        <dbReference type="ChEBI" id="CHEBI:30616"/>
        <dbReference type="ChEBI" id="CHEBI:33019"/>
        <dbReference type="ChEBI" id="CHEBI:78442"/>
        <dbReference type="ChEBI" id="CHEBI:78516"/>
        <dbReference type="ChEBI" id="CHEBI:456215"/>
        <dbReference type="EC" id="6.1.1.12"/>
    </reaction>
</comment>
<comment type="subunit">
    <text evidence="1">Homodimer.</text>
</comment>
<comment type="subcellular location">
    <subcellularLocation>
        <location evidence="1">Cytoplasm</location>
    </subcellularLocation>
</comment>
<comment type="similarity">
    <text evidence="1">Belongs to the class-II aminoacyl-tRNA synthetase family. Type 1 subfamily.</text>
</comment>
<sequence length="582" mass="66137">MKRSMYAGHVRKEHIGRTIVLKGWVSRRRDLGGLIFIDLRDREGVMQLVINPEDVSGDVMATAERLRSEYVIEVEGSVEARQQANDKLATGAVELKVSGLTILNTAKTTPFEIKDGVEVSDDTRLRYRYLDLRRPEMLESFKLRAKTTHVIRNYLDNLGFIDVETPMLTKSTPEGARDYLVPSRISQGHFYALPQSPQITKQLLMNAGFDRYYQIVKCFRDEDLRGDRQPEFTQVDLETSFLSEQEIQDIVEGMIAKVMKDTKGIEVKLPFPRMAYDDAMNHYGSDKPDTRFDMFLQDLTDLVKEIDFKVFSEAQAVKAIVVKGHADRYSRKDIDKLTEFAKQFGAKGLAWLKVADGAFTGPIAKFLTGVESKLTESLQLEHNDLVLFVADTLEVANNTLGALRTRIAKELDMIDMSQFNFLWVVDWPMFEWSEEEERYMSAHHPFTLPTAESAHELEGDLAKVRAVAYDIVLNGYELGGGSLRINQKDMQERMFRALGFTAEEANEQFGFLLEAMEYGFPPHGGLAIGLDRLVMLLAGKDNIREVIAFPKNNKASDPMTQAPSLVSEKQLEELQLQIEHHD</sequence>
<proteinExistence type="inferred from homology"/>